<feature type="chain" id="PRO_1000017585" description="Large ribosomal subunit protein bL27">
    <location>
        <begin position="1"/>
        <end position="86"/>
    </location>
</feature>
<feature type="region of interest" description="Disordered" evidence="2">
    <location>
        <begin position="1"/>
        <end position="22"/>
    </location>
</feature>
<reference key="1">
    <citation type="submission" date="2007-09" db="EMBL/GenBank/DDBJ databases">
        <title>Complete genome sequencing of Rickettsia bellii.</title>
        <authorList>
            <person name="Madan A."/>
            <person name="Lee H."/>
            <person name="Madan A."/>
            <person name="Yoon J.-G."/>
            <person name="Ryu G.-Y."/>
            <person name="Dasch G."/>
            <person name="Ereemeva M."/>
        </authorList>
    </citation>
    <scope>NUCLEOTIDE SEQUENCE [LARGE SCALE GENOMIC DNA]</scope>
    <source>
        <strain>OSU 85-389</strain>
    </source>
</reference>
<gene>
    <name evidence="1" type="primary">rpmA</name>
    <name type="ordered locus">A1I_07825</name>
</gene>
<name>RL27_RICB8</name>
<keyword id="KW-0687">Ribonucleoprotein</keyword>
<keyword id="KW-0689">Ribosomal protein</keyword>
<dbReference type="EMBL" id="CP000849">
    <property type="protein sequence ID" value="ABV79863.1"/>
    <property type="molecule type" value="Genomic_DNA"/>
</dbReference>
<dbReference type="RefSeq" id="WP_011478055.1">
    <property type="nucleotide sequence ID" value="NC_009883.1"/>
</dbReference>
<dbReference type="SMR" id="A8GYB3"/>
<dbReference type="KEGG" id="rbo:A1I_07825"/>
<dbReference type="HOGENOM" id="CLU_095424_4_1_5"/>
<dbReference type="GO" id="GO:1990904">
    <property type="term" value="C:ribonucleoprotein complex"/>
    <property type="evidence" value="ECO:0007669"/>
    <property type="project" value="UniProtKB-KW"/>
</dbReference>
<dbReference type="GO" id="GO:0005840">
    <property type="term" value="C:ribosome"/>
    <property type="evidence" value="ECO:0007669"/>
    <property type="project" value="UniProtKB-KW"/>
</dbReference>
<dbReference type="GO" id="GO:0003735">
    <property type="term" value="F:structural constituent of ribosome"/>
    <property type="evidence" value="ECO:0007669"/>
    <property type="project" value="InterPro"/>
</dbReference>
<dbReference type="GO" id="GO:0006412">
    <property type="term" value="P:translation"/>
    <property type="evidence" value="ECO:0007669"/>
    <property type="project" value="UniProtKB-UniRule"/>
</dbReference>
<dbReference type="FunFam" id="2.40.50.100:FF:000020">
    <property type="entry name" value="50S ribosomal protein L27"/>
    <property type="match status" value="1"/>
</dbReference>
<dbReference type="Gene3D" id="2.40.50.100">
    <property type="match status" value="1"/>
</dbReference>
<dbReference type="HAMAP" id="MF_00539">
    <property type="entry name" value="Ribosomal_bL27"/>
    <property type="match status" value="1"/>
</dbReference>
<dbReference type="InterPro" id="IPR001684">
    <property type="entry name" value="Ribosomal_bL27"/>
</dbReference>
<dbReference type="InterPro" id="IPR018261">
    <property type="entry name" value="Ribosomal_bL27_CS"/>
</dbReference>
<dbReference type="NCBIfam" id="TIGR00062">
    <property type="entry name" value="L27"/>
    <property type="match status" value="1"/>
</dbReference>
<dbReference type="PANTHER" id="PTHR15893:SF0">
    <property type="entry name" value="LARGE RIBOSOMAL SUBUNIT PROTEIN BL27M"/>
    <property type="match status" value="1"/>
</dbReference>
<dbReference type="PANTHER" id="PTHR15893">
    <property type="entry name" value="RIBOSOMAL PROTEIN L27"/>
    <property type="match status" value="1"/>
</dbReference>
<dbReference type="Pfam" id="PF01016">
    <property type="entry name" value="Ribosomal_L27"/>
    <property type="match status" value="1"/>
</dbReference>
<dbReference type="PRINTS" id="PR00063">
    <property type="entry name" value="RIBOSOMALL27"/>
</dbReference>
<dbReference type="SUPFAM" id="SSF110324">
    <property type="entry name" value="Ribosomal L27 protein-like"/>
    <property type="match status" value="1"/>
</dbReference>
<dbReference type="PROSITE" id="PS00831">
    <property type="entry name" value="RIBOSOMAL_L27"/>
    <property type="match status" value="1"/>
</dbReference>
<comment type="similarity">
    <text evidence="1">Belongs to the bacterial ribosomal protein bL27 family.</text>
</comment>
<protein>
    <recommendedName>
        <fullName evidence="1">Large ribosomal subunit protein bL27</fullName>
    </recommendedName>
    <alternativeName>
        <fullName evidence="3">50S ribosomal protein L27</fullName>
    </alternativeName>
</protein>
<proteinExistence type="inferred from homology"/>
<sequence length="86" mass="9181">MATKKAGGSSRNGRDSAGRRLGVKKADGQYVIPGNIIVRQRGTKIHPGVNVGIGKDHTIFALTSGRVEFLTKRDHKIVNVTEIASA</sequence>
<accession>A8GYB3</accession>
<organism>
    <name type="scientific">Rickettsia bellii (strain OSU 85-389)</name>
    <dbReference type="NCBI Taxonomy" id="391896"/>
    <lineage>
        <taxon>Bacteria</taxon>
        <taxon>Pseudomonadati</taxon>
        <taxon>Pseudomonadota</taxon>
        <taxon>Alphaproteobacteria</taxon>
        <taxon>Rickettsiales</taxon>
        <taxon>Rickettsiaceae</taxon>
        <taxon>Rickettsieae</taxon>
        <taxon>Rickettsia</taxon>
        <taxon>belli group</taxon>
    </lineage>
</organism>
<evidence type="ECO:0000255" key="1">
    <source>
        <dbReference type="HAMAP-Rule" id="MF_00539"/>
    </source>
</evidence>
<evidence type="ECO:0000256" key="2">
    <source>
        <dbReference type="SAM" id="MobiDB-lite"/>
    </source>
</evidence>
<evidence type="ECO:0000305" key="3"/>